<gene>
    <name evidence="1" type="primary">lptD</name>
    <name type="synonym">imp</name>
    <name type="synonym">ostA</name>
    <name type="ordered locus">FTL_1597</name>
</gene>
<reference key="1">
    <citation type="submission" date="2006-03" db="EMBL/GenBank/DDBJ databases">
        <title>Complete genome sequence of Francisella tularensis LVS (Live Vaccine Strain).</title>
        <authorList>
            <person name="Chain P."/>
            <person name="Larimer F."/>
            <person name="Land M."/>
            <person name="Stilwagen S."/>
            <person name="Larsson P."/>
            <person name="Bearden S."/>
            <person name="Chu M."/>
            <person name="Oyston P."/>
            <person name="Forsman M."/>
            <person name="Andersson S."/>
            <person name="Lindler L."/>
            <person name="Titball R."/>
            <person name="Garcia E."/>
        </authorList>
    </citation>
    <scope>NUCLEOTIDE SEQUENCE [LARGE SCALE GENOMIC DNA]</scope>
    <source>
        <strain>LVS</strain>
    </source>
</reference>
<evidence type="ECO:0000255" key="1">
    <source>
        <dbReference type="HAMAP-Rule" id="MF_01411"/>
    </source>
</evidence>
<sequence>MLKGIHKYLLMCFGTVLFTVQANAARIMSNNPIKEDWQCKVVDGEWSCKRAKKPKSVFDKKLTKTEKEKALADDLAWVKKPSYFVGGYYSNDNQFTKALCESKKTDLSYEKSEFDNYGTLIASGNVQVLQCDQELYGNNAIINLNSNNSAIRSLVMAGDVIVKQPSTGIVIRTTELDADMNNGTYSTGEAYFRLAREMPKTRIYDKEHFSGYLRGYAKTFKKESSGDIVLSDGYITSGDPYDNAWKITGNNIDIDTNTHMAYVKNGYFEIQDIPVMYIPYFSHPIDDRRRSGFLYPGFLQNANSGIGISVPYYFNLAPNYDLMLQSVIWSQRGIIENGTFRYMTKYFQGQFEGSLVPYDFKEGKMRSSFTLSTTGQYENINTNFKYEYVSDQNYYNDFSAGNVNLVTKTLLDREFDLTYTNDYVDSGLTVLDYGVVNPLLTVDNTPYAKLPEVKLNLTSDGYTPDYLTLSAQTLNTFFYKTAGPANTNPGAPQGTNVNAFRAYESPKIAFNFNKTWGYLKPSLELPIRYYKLNNKPTDIIKFKNSNVTSVLPIFNIDAGAYFDKDYTNENGTYTSTLHPRLFYTYIPYQDQTNIPLFDTSLQNEQYMQMFQVNRFTGYDRINNANQLTYAIEASTTNQDNGTTLASAKIGQMAYFADRKVNLCQGNSACPNPGLMDPFSTDTFSPIMSSFEFQVMKNIYLSAQVNYRVKQQNVDYQVYQLSYKDENENIFNVSYNNIANNWNSLTQQQIAEGAKPQPQETITLSTVLNITDHWGIAALWNYNFQQKQIANIFAGLQYNAKSWAVRALWQKTAYTNQDPNNPTLLGPLVNTYMFEFELKGLGGIGNTSDISSRLQQINGYQVGEWGNGI</sequence>
<feature type="signal peptide" evidence="1">
    <location>
        <begin position="1"/>
        <end position="24"/>
    </location>
</feature>
<feature type="chain" id="PRO_0000281604" description="LPS-assembly protein LptD">
    <location>
        <begin position="25"/>
        <end position="868"/>
    </location>
</feature>
<organism>
    <name type="scientific">Francisella tularensis subsp. holarctica (strain LVS)</name>
    <dbReference type="NCBI Taxonomy" id="376619"/>
    <lineage>
        <taxon>Bacteria</taxon>
        <taxon>Pseudomonadati</taxon>
        <taxon>Pseudomonadota</taxon>
        <taxon>Gammaproteobacteria</taxon>
        <taxon>Thiotrichales</taxon>
        <taxon>Francisellaceae</taxon>
        <taxon>Francisella</taxon>
    </lineage>
</organism>
<comment type="function">
    <text evidence="1">Together with LptE, is involved in the assembly of lipopolysaccharide (LPS) at the surface of the outer membrane.</text>
</comment>
<comment type="subunit">
    <text evidence="1">Component of the lipopolysaccharide transport and assembly complex. Interacts with LptE and LptA.</text>
</comment>
<comment type="subcellular location">
    <subcellularLocation>
        <location evidence="1">Cell outer membrane</location>
    </subcellularLocation>
</comment>
<comment type="similarity">
    <text evidence="1">Belongs to the LptD family.</text>
</comment>
<protein>
    <recommendedName>
        <fullName evidence="1">LPS-assembly protein LptD</fullName>
    </recommendedName>
</protein>
<name>LPTD_FRATH</name>
<accession>Q2A216</accession>
<keyword id="KW-0998">Cell outer membrane</keyword>
<keyword id="KW-0472">Membrane</keyword>
<keyword id="KW-1185">Reference proteome</keyword>
<keyword id="KW-0732">Signal</keyword>
<proteinExistence type="inferred from homology"/>
<dbReference type="EMBL" id="AM233362">
    <property type="protein sequence ID" value="CAJ80036.1"/>
    <property type="molecule type" value="Genomic_DNA"/>
</dbReference>
<dbReference type="RefSeq" id="WP_003016981.1">
    <property type="nucleotide sequence ID" value="NZ_CP009694.1"/>
</dbReference>
<dbReference type="SMR" id="Q2A216"/>
<dbReference type="KEGG" id="ftl:FTL_1597"/>
<dbReference type="Proteomes" id="UP000001944">
    <property type="component" value="Chromosome"/>
</dbReference>
<dbReference type="GO" id="GO:0009279">
    <property type="term" value="C:cell outer membrane"/>
    <property type="evidence" value="ECO:0007669"/>
    <property type="project" value="UniProtKB-SubCell"/>
</dbReference>
<dbReference type="GO" id="GO:1990351">
    <property type="term" value="C:transporter complex"/>
    <property type="evidence" value="ECO:0007669"/>
    <property type="project" value="TreeGrafter"/>
</dbReference>
<dbReference type="GO" id="GO:0043165">
    <property type="term" value="P:Gram-negative-bacterium-type cell outer membrane assembly"/>
    <property type="evidence" value="ECO:0007669"/>
    <property type="project" value="UniProtKB-UniRule"/>
</dbReference>
<dbReference type="GO" id="GO:0015920">
    <property type="term" value="P:lipopolysaccharide transport"/>
    <property type="evidence" value="ECO:0007669"/>
    <property type="project" value="InterPro"/>
</dbReference>
<dbReference type="HAMAP" id="MF_01411">
    <property type="entry name" value="LPS_assembly_LptD"/>
    <property type="match status" value="1"/>
</dbReference>
<dbReference type="InterPro" id="IPR020889">
    <property type="entry name" value="LipoPS_assembly_LptD"/>
</dbReference>
<dbReference type="InterPro" id="IPR050218">
    <property type="entry name" value="LptD"/>
</dbReference>
<dbReference type="InterPro" id="IPR007543">
    <property type="entry name" value="LptD_C"/>
</dbReference>
<dbReference type="InterPro" id="IPR005653">
    <property type="entry name" value="OstA-like_N"/>
</dbReference>
<dbReference type="PANTHER" id="PTHR30189">
    <property type="entry name" value="LPS-ASSEMBLY PROTEIN"/>
    <property type="match status" value="1"/>
</dbReference>
<dbReference type="PANTHER" id="PTHR30189:SF1">
    <property type="entry name" value="LPS-ASSEMBLY PROTEIN LPTD"/>
    <property type="match status" value="1"/>
</dbReference>
<dbReference type="Pfam" id="PF04453">
    <property type="entry name" value="LptD"/>
    <property type="match status" value="1"/>
</dbReference>
<dbReference type="Pfam" id="PF03968">
    <property type="entry name" value="LptD_N"/>
    <property type="match status" value="1"/>
</dbReference>